<name>GRPE_BACHK</name>
<proteinExistence type="inferred from homology"/>
<dbReference type="EMBL" id="AE017355">
    <property type="protein sequence ID" value="AAT63556.1"/>
    <property type="molecule type" value="Genomic_DNA"/>
</dbReference>
<dbReference type="RefSeq" id="WP_000392710.1">
    <property type="nucleotide sequence ID" value="NC_005957.1"/>
</dbReference>
<dbReference type="RefSeq" id="YP_038370.1">
    <property type="nucleotide sequence ID" value="NC_005957.1"/>
</dbReference>
<dbReference type="SMR" id="Q6HDK6"/>
<dbReference type="GeneID" id="72450997"/>
<dbReference type="KEGG" id="btk:BT9727_4052"/>
<dbReference type="PATRIC" id="fig|281309.8.peg.4324"/>
<dbReference type="HOGENOM" id="CLU_057217_5_2_9"/>
<dbReference type="Proteomes" id="UP000001301">
    <property type="component" value="Chromosome"/>
</dbReference>
<dbReference type="GO" id="GO:0005737">
    <property type="term" value="C:cytoplasm"/>
    <property type="evidence" value="ECO:0007669"/>
    <property type="project" value="UniProtKB-SubCell"/>
</dbReference>
<dbReference type="GO" id="GO:0000774">
    <property type="term" value="F:adenyl-nucleotide exchange factor activity"/>
    <property type="evidence" value="ECO:0007669"/>
    <property type="project" value="InterPro"/>
</dbReference>
<dbReference type="GO" id="GO:0042803">
    <property type="term" value="F:protein homodimerization activity"/>
    <property type="evidence" value="ECO:0007669"/>
    <property type="project" value="InterPro"/>
</dbReference>
<dbReference type="GO" id="GO:0051087">
    <property type="term" value="F:protein-folding chaperone binding"/>
    <property type="evidence" value="ECO:0007669"/>
    <property type="project" value="InterPro"/>
</dbReference>
<dbReference type="GO" id="GO:0051082">
    <property type="term" value="F:unfolded protein binding"/>
    <property type="evidence" value="ECO:0007669"/>
    <property type="project" value="TreeGrafter"/>
</dbReference>
<dbReference type="GO" id="GO:0006457">
    <property type="term" value="P:protein folding"/>
    <property type="evidence" value="ECO:0007669"/>
    <property type="project" value="InterPro"/>
</dbReference>
<dbReference type="CDD" id="cd00446">
    <property type="entry name" value="GrpE"/>
    <property type="match status" value="1"/>
</dbReference>
<dbReference type="FunFam" id="2.30.22.10:FF:000001">
    <property type="entry name" value="Protein GrpE"/>
    <property type="match status" value="1"/>
</dbReference>
<dbReference type="FunFam" id="3.90.20.20:FF:000002">
    <property type="entry name" value="Protein GrpE"/>
    <property type="match status" value="1"/>
</dbReference>
<dbReference type="Gene3D" id="3.90.20.20">
    <property type="match status" value="1"/>
</dbReference>
<dbReference type="Gene3D" id="2.30.22.10">
    <property type="entry name" value="Head domain of nucleotide exchange factor GrpE"/>
    <property type="match status" value="1"/>
</dbReference>
<dbReference type="HAMAP" id="MF_01151">
    <property type="entry name" value="GrpE"/>
    <property type="match status" value="1"/>
</dbReference>
<dbReference type="InterPro" id="IPR000740">
    <property type="entry name" value="GrpE"/>
</dbReference>
<dbReference type="InterPro" id="IPR013805">
    <property type="entry name" value="GrpE_coiled_coil"/>
</dbReference>
<dbReference type="InterPro" id="IPR009012">
    <property type="entry name" value="GrpE_head"/>
</dbReference>
<dbReference type="NCBIfam" id="NF010738">
    <property type="entry name" value="PRK14140.1"/>
    <property type="match status" value="1"/>
</dbReference>
<dbReference type="PANTHER" id="PTHR21237">
    <property type="entry name" value="GRPE PROTEIN"/>
    <property type="match status" value="1"/>
</dbReference>
<dbReference type="PANTHER" id="PTHR21237:SF23">
    <property type="entry name" value="GRPE PROTEIN HOMOLOG, MITOCHONDRIAL"/>
    <property type="match status" value="1"/>
</dbReference>
<dbReference type="Pfam" id="PF01025">
    <property type="entry name" value="GrpE"/>
    <property type="match status" value="1"/>
</dbReference>
<dbReference type="PRINTS" id="PR00773">
    <property type="entry name" value="GRPEPROTEIN"/>
</dbReference>
<dbReference type="SUPFAM" id="SSF58014">
    <property type="entry name" value="Coiled-coil domain of nucleotide exchange factor GrpE"/>
    <property type="match status" value="1"/>
</dbReference>
<dbReference type="SUPFAM" id="SSF51064">
    <property type="entry name" value="Head domain of nucleotide exchange factor GrpE"/>
    <property type="match status" value="1"/>
</dbReference>
<dbReference type="PROSITE" id="PS01071">
    <property type="entry name" value="GRPE"/>
    <property type="match status" value="1"/>
</dbReference>
<feature type="chain" id="PRO_0000113739" description="Protein GrpE">
    <location>
        <begin position="1"/>
        <end position="188"/>
    </location>
</feature>
<feature type="region of interest" description="Disordered" evidence="2">
    <location>
        <begin position="1"/>
        <end position="31"/>
    </location>
</feature>
<feature type="compositionally biased region" description="Basic and acidic residues" evidence="2">
    <location>
        <begin position="1"/>
        <end position="16"/>
    </location>
</feature>
<accession>Q6HDK6</accession>
<keyword id="KW-0143">Chaperone</keyword>
<keyword id="KW-0963">Cytoplasm</keyword>
<keyword id="KW-0346">Stress response</keyword>
<reference key="1">
    <citation type="journal article" date="2006" name="J. Bacteriol.">
        <title>Pathogenomic sequence analysis of Bacillus cereus and Bacillus thuringiensis isolates closely related to Bacillus anthracis.</title>
        <authorList>
            <person name="Han C.S."/>
            <person name="Xie G."/>
            <person name="Challacombe J.F."/>
            <person name="Altherr M.R."/>
            <person name="Bhotika S.S."/>
            <person name="Bruce D."/>
            <person name="Campbell C.S."/>
            <person name="Campbell M.L."/>
            <person name="Chen J."/>
            <person name="Chertkov O."/>
            <person name="Cleland C."/>
            <person name="Dimitrijevic M."/>
            <person name="Doggett N.A."/>
            <person name="Fawcett J.J."/>
            <person name="Glavina T."/>
            <person name="Goodwin L.A."/>
            <person name="Hill K.K."/>
            <person name="Hitchcock P."/>
            <person name="Jackson P.J."/>
            <person name="Keim P."/>
            <person name="Kewalramani A.R."/>
            <person name="Longmire J."/>
            <person name="Lucas S."/>
            <person name="Malfatti S."/>
            <person name="McMurry K."/>
            <person name="Meincke L.J."/>
            <person name="Misra M."/>
            <person name="Moseman B.L."/>
            <person name="Mundt M."/>
            <person name="Munk A.C."/>
            <person name="Okinaka R.T."/>
            <person name="Parson-Quintana B."/>
            <person name="Reilly L.P."/>
            <person name="Richardson P."/>
            <person name="Robinson D.L."/>
            <person name="Rubin E."/>
            <person name="Saunders E."/>
            <person name="Tapia R."/>
            <person name="Tesmer J.G."/>
            <person name="Thayer N."/>
            <person name="Thompson L.S."/>
            <person name="Tice H."/>
            <person name="Ticknor L.O."/>
            <person name="Wills P.L."/>
            <person name="Brettin T.S."/>
            <person name="Gilna P."/>
        </authorList>
    </citation>
    <scope>NUCLEOTIDE SEQUENCE [LARGE SCALE GENOMIC DNA]</scope>
    <source>
        <strain>97-27</strain>
    </source>
</reference>
<gene>
    <name evidence="1" type="primary">grpE</name>
    <name type="ordered locus">BT9727_4052</name>
</gene>
<sequence length="188" mass="21657">MEERNEQVVEEVKEAQVEEAVTPENSEETVEEKSEAALLQEKVDELQAKLTETEGRTLRLQADFENYKRRVQMDKQAAEKYRAQSLVSDILPALDNFERAMQVEATDEQTKSLLQGMEMVHRQLLEALNKEGVEVIEAVGKQFDPNEHQAIMQVEDSEFESNAVVEEFQKGYKLKDRVIRPSMVKVNQ</sequence>
<organism>
    <name type="scientific">Bacillus thuringiensis subsp. konkukian (strain 97-27)</name>
    <dbReference type="NCBI Taxonomy" id="281309"/>
    <lineage>
        <taxon>Bacteria</taxon>
        <taxon>Bacillati</taxon>
        <taxon>Bacillota</taxon>
        <taxon>Bacilli</taxon>
        <taxon>Bacillales</taxon>
        <taxon>Bacillaceae</taxon>
        <taxon>Bacillus</taxon>
        <taxon>Bacillus cereus group</taxon>
    </lineage>
</organism>
<protein>
    <recommendedName>
        <fullName evidence="1">Protein GrpE</fullName>
    </recommendedName>
    <alternativeName>
        <fullName evidence="1">HSP-70 cofactor</fullName>
    </alternativeName>
</protein>
<evidence type="ECO:0000255" key="1">
    <source>
        <dbReference type="HAMAP-Rule" id="MF_01151"/>
    </source>
</evidence>
<evidence type="ECO:0000256" key="2">
    <source>
        <dbReference type="SAM" id="MobiDB-lite"/>
    </source>
</evidence>
<comment type="function">
    <text evidence="1">Participates actively in the response to hyperosmotic and heat shock by preventing the aggregation of stress-denatured proteins, in association with DnaK and GrpE. It is the nucleotide exchange factor for DnaK and may function as a thermosensor. Unfolded proteins bind initially to DnaJ; upon interaction with the DnaJ-bound protein, DnaK hydrolyzes its bound ATP, resulting in the formation of a stable complex. GrpE releases ADP from DnaK; ATP binding to DnaK triggers the release of the substrate protein, thus completing the reaction cycle. Several rounds of ATP-dependent interactions between DnaJ, DnaK and GrpE are required for fully efficient folding.</text>
</comment>
<comment type="subunit">
    <text evidence="1">Homodimer.</text>
</comment>
<comment type="subcellular location">
    <subcellularLocation>
        <location evidence="1">Cytoplasm</location>
    </subcellularLocation>
</comment>
<comment type="similarity">
    <text evidence="1">Belongs to the GrpE family.</text>
</comment>